<organism>
    <name type="scientific">Uncinocarpus reesii (strain UAMH 1704)</name>
    <dbReference type="NCBI Taxonomy" id="336963"/>
    <lineage>
        <taxon>Eukaryota</taxon>
        <taxon>Fungi</taxon>
        <taxon>Dikarya</taxon>
        <taxon>Ascomycota</taxon>
        <taxon>Pezizomycotina</taxon>
        <taxon>Eurotiomycetes</taxon>
        <taxon>Eurotiomycetidae</taxon>
        <taxon>Onygenales</taxon>
        <taxon>Onygenaceae</taxon>
        <taxon>Uncinocarpus</taxon>
    </lineage>
</organism>
<feature type="signal peptide" evidence="2">
    <location>
        <begin position="1"/>
        <end position="19"/>
    </location>
</feature>
<feature type="propeptide" id="PRO_0000407172" evidence="1">
    <location>
        <begin position="20"/>
        <end position="246"/>
    </location>
</feature>
<feature type="chain" id="PRO_0000407173" description="Extracellular metalloproteinase 9">
    <location>
        <begin position="247"/>
        <end position="635"/>
    </location>
</feature>
<feature type="region of interest" description="Disordered" evidence="4">
    <location>
        <begin position="279"/>
        <end position="307"/>
    </location>
</feature>
<feature type="active site" evidence="3">
    <location>
        <position position="431"/>
    </location>
</feature>
<feature type="binding site" evidence="3">
    <location>
        <position position="430"/>
    </location>
    <ligand>
        <name>Zn(2+)</name>
        <dbReference type="ChEBI" id="CHEBI:29105"/>
        <note>catalytic</note>
    </ligand>
</feature>
<feature type="binding site" evidence="3">
    <location>
        <position position="434"/>
    </location>
    <ligand>
        <name>Zn(2+)</name>
        <dbReference type="ChEBI" id="CHEBI:29105"/>
        <note>catalytic</note>
    </ligand>
</feature>
<feature type="glycosylation site" description="N-linked (GlcNAc...) asparagine" evidence="2">
    <location>
        <position position="274"/>
    </location>
</feature>
<feature type="glycosylation site" description="N-linked (GlcNAc...) asparagine" evidence="2">
    <location>
        <position position="413"/>
    </location>
</feature>
<feature type="glycosylation site" description="N-linked (GlcNAc...) asparagine" evidence="2">
    <location>
        <position position="475"/>
    </location>
</feature>
<accession>C4JR56</accession>
<name>MEP9_UNCRE</name>
<evidence type="ECO:0000250" key="1"/>
<evidence type="ECO:0000255" key="2"/>
<evidence type="ECO:0000255" key="3">
    <source>
        <dbReference type="PROSITE-ProRule" id="PRU10095"/>
    </source>
</evidence>
<evidence type="ECO:0000256" key="4">
    <source>
        <dbReference type="SAM" id="MobiDB-lite"/>
    </source>
</evidence>
<evidence type="ECO:0000305" key="5"/>
<comment type="function">
    <text evidence="1">Secreted metalloproteinase that allows assimilation of proteinaceous substrates.</text>
</comment>
<comment type="cofactor">
    <cofactor evidence="1">
        <name>Zn(2+)</name>
        <dbReference type="ChEBI" id="CHEBI:29105"/>
    </cofactor>
    <text evidence="1">Binds 1 zinc ion per subunit.</text>
</comment>
<comment type="subcellular location">
    <subcellularLocation>
        <location evidence="1">Secreted</location>
    </subcellularLocation>
</comment>
<comment type="similarity">
    <text evidence="5">Belongs to the peptidase M36 family.</text>
</comment>
<reference key="1">
    <citation type="journal article" date="2009" name="Genome Res.">
        <title>Comparative genomic analyses of the human fungal pathogens Coccidioides and their relatives.</title>
        <authorList>
            <person name="Sharpton T.J."/>
            <person name="Stajich J.E."/>
            <person name="Rounsley S.D."/>
            <person name="Gardner M.J."/>
            <person name="Wortman J.R."/>
            <person name="Jordar V.S."/>
            <person name="Maiti R."/>
            <person name="Kodira C.D."/>
            <person name="Neafsey D.E."/>
            <person name="Zeng Q."/>
            <person name="Hung C.-Y."/>
            <person name="McMahan C."/>
            <person name="Muszewska A."/>
            <person name="Grynberg M."/>
            <person name="Mandel M.A."/>
            <person name="Kellner E.M."/>
            <person name="Barker B.M."/>
            <person name="Galgiani J.N."/>
            <person name="Orbach M.J."/>
            <person name="Kirkland T.N."/>
            <person name="Cole G.T."/>
            <person name="Henn M.R."/>
            <person name="Birren B.W."/>
            <person name="Taylor J.W."/>
        </authorList>
    </citation>
    <scope>NUCLEOTIDE SEQUENCE [LARGE SCALE GENOMIC DNA]</scope>
    <source>
        <strain>UAMH 1704</strain>
    </source>
</reference>
<sequence>MHGLLLAAGLLTLPLRALAHPGHQSTSILSRRGAVDLDAYRVSAKAEYSNVNDVAENPPAVSLMSSGSYVDIATELVKTTLPGVTFRVVNDHYVGTNGVAHVHFRQTIHGVDVDNADFNVNVKDGKVFSFGNGFYKGEIPKENPMVKRDFSDPVHALKGACNALKIPIKTNKVSVKSGKGQESVVFKGTSGALSEPKGDLVYFVKPDGKLSLTWRVETDVGDNWLSSYVDAKDSSKIHGVTDYVADATFQVYPWGLNDPTEGSRQTLTDPWERNASEFTWHSDGNTRYPTTRGNNGIAQDNPSGGTGYLNNYRPQSSALRFEYPYSTSMSPPTSYKDASITQLFYTANTFHDLTYLLGFTERAGNFEVNNNNQGGRGNDFVILNAQDGSGVNNANFATPPDGQPGRMRMYTWNRSQPNRDGCFEAGIVIHEYAHGLSNRLCGGPANSRCLSALESGGMGEGWGDFLATAIRLKANDTRRTSYTMGEWASNQRGGIRQYPYSTSTTTNPLVYTTVNRYNRVHDIGTVWATMLYEVLWNLIDKHGKNDGPRPEFRNGVPTDGKYLTMKLVIDGMALMPCNPNFVQARDAIIDADEALTGGQNKCEIWAGFAKRQLGTGARYGRTNRVGSTEVPSECR</sequence>
<proteinExistence type="inferred from homology"/>
<dbReference type="EC" id="3.4.24.-"/>
<dbReference type="EMBL" id="CH476616">
    <property type="protein sequence ID" value="EEP78692.1"/>
    <property type="molecule type" value="Genomic_DNA"/>
</dbReference>
<dbReference type="RefSeq" id="XP_002544021.1">
    <property type="nucleotide sequence ID" value="XM_002543975.1"/>
</dbReference>
<dbReference type="SMR" id="C4JR56"/>
<dbReference type="MEROPS" id="M36.001"/>
<dbReference type="GlyCosmos" id="C4JR56">
    <property type="glycosylation" value="3 sites, No reported glycans"/>
</dbReference>
<dbReference type="GeneID" id="8437440"/>
<dbReference type="KEGG" id="ure:UREG_03538"/>
<dbReference type="VEuPathDB" id="FungiDB:UREG_03538"/>
<dbReference type="eggNOG" id="ENOG502QTDC">
    <property type="taxonomic scope" value="Eukaryota"/>
</dbReference>
<dbReference type="HOGENOM" id="CLU_012703_3_0_1"/>
<dbReference type="InParanoid" id="C4JR56"/>
<dbReference type="OMA" id="IRKDSYT"/>
<dbReference type="OrthoDB" id="3227768at2759"/>
<dbReference type="Proteomes" id="UP000002058">
    <property type="component" value="Unassembled WGS sequence"/>
</dbReference>
<dbReference type="GO" id="GO:0005576">
    <property type="term" value="C:extracellular region"/>
    <property type="evidence" value="ECO:0007669"/>
    <property type="project" value="UniProtKB-SubCell"/>
</dbReference>
<dbReference type="GO" id="GO:0004222">
    <property type="term" value="F:metalloendopeptidase activity"/>
    <property type="evidence" value="ECO:0007669"/>
    <property type="project" value="InterPro"/>
</dbReference>
<dbReference type="GO" id="GO:0008270">
    <property type="term" value="F:zinc ion binding"/>
    <property type="evidence" value="ECO:0007669"/>
    <property type="project" value="InterPro"/>
</dbReference>
<dbReference type="GO" id="GO:0006508">
    <property type="term" value="P:proteolysis"/>
    <property type="evidence" value="ECO:0007669"/>
    <property type="project" value="UniProtKB-KW"/>
</dbReference>
<dbReference type="CDD" id="cd09596">
    <property type="entry name" value="M36"/>
    <property type="match status" value="1"/>
</dbReference>
<dbReference type="Gene3D" id="3.10.170.10">
    <property type="match status" value="1"/>
</dbReference>
<dbReference type="Gene3D" id="1.10.390.10">
    <property type="entry name" value="Neutral Protease Domain 2"/>
    <property type="match status" value="1"/>
</dbReference>
<dbReference type="InterPro" id="IPR011096">
    <property type="entry name" value="FTP_domain"/>
</dbReference>
<dbReference type="InterPro" id="IPR050371">
    <property type="entry name" value="Fungal_virulence_M36"/>
</dbReference>
<dbReference type="InterPro" id="IPR001842">
    <property type="entry name" value="Peptidase_M36"/>
</dbReference>
<dbReference type="InterPro" id="IPR027268">
    <property type="entry name" value="Peptidase_M4/M1_CTD_sf"/>
</dbReference>
<dbReference type="PANTHER" id="PTHR33478">
    <property type="entry name" value="EXTRACELLULAR METALLOPROTEINASE MEP"/>
    <property type="match status" value="1"/>
</dbReference>
<dbReference type="PANTHER" id="PTHR33478:SF1">
    <property type="entry name" value="EXTRACELLULAR METALLOPROTEINASE MEP"/>
    <property type="match status" value="1"/>
</dbReference>
<dbReference type="Pfam" id="PF07504">
    <property type="entry name" value="FTP"/>
    <property type="match status" value="1"/>
</dbReference>
<dbReference type="Pfam" id="PF02128">
    <property type="entry name" value="Peptidase_M36"/>
    <property type="match status" value="1"/>
</dbReference>
<dbReference type="PRINTS" id="PR00999">
    <property type="entry name" value="FUNGALYSIN"/>
</dbReference>
<dbReference type="SUPFAM" id="SSF55486">
    <property type="entry name" value="Metalloproteases ('zincins'), catalytic domain"/>
    <property type="match status" value="1"/>
</dbReference>
<dbReference type="PROSITE" id="PS00142">
    <property type="entry name" value="ZINC_PROTEASE"/>
    <property type="match status" value="1"/>
</dbReference>
<keyword id="KW-0325">Glycoprotein</keyword>
<keyword id="KW-0378">Hydrolase</keyword>
<keyword id="KW-0479">Metal-binding</keyword>
<keyword id="KW-0482">Metalloprotease</keyword>
<keyword id="KW-0645">Protease</keyword>
<keyword id="KW-1185">Reference proteome</keyword>
<keyword id="KW-0964">Secreted</keyword>
<keyword id="KW-0732">Signal</keyword>
<keyword id="KW-0862">Zinc</keyword>
<keyword id="KW-0865">Zymogen</keyword>
<gene>
    <name type="primary">MEP9</name>
    <name type="ORF">UREG_03538</name>
</gene>
<protein>
    <recommendedName>
        <fullName>Extracellular metalloproteinase 9</fullName>
        <ecNumber>3.4.24.-</ecNumber>
    </recommendedName>
    <alternativeName>
        <fullName>Elastinolytic metalloproteinase MEP9</fullName>
    </alternativeName>
    <alternativeName>
        <fullName>Fungalysin MEP9</fullName>
    </alternativeName>
</protein>